<sequence length="111" mass="11650">MDKERIIQEFVPGKQVTLAHLIAHPGEELAKKIGVPDAGAIGIMTLTPGETAMIAGDLALKAADVHIGFLDRFSGALVIYGSVGAVEEALSQTVSGLGRLLNYTLCEMTKS</sequence>
<proteinExistence type="inferred from homology"/>
<dbReference type="EMBL" id="AE005674">
    <property type="protein sequence ID" value="AAN44008.1"/>
    <property type="status" value="ALT_INIT"/>
    <property type="molecule type" value="Genomic_DNA"/>
</dbReference>
<dbReference type="EMBL" id="AE014073">
    <property type="protein sequence ID" value="AAP17823.1"/>
    <property type="status" value="ALT_INIT"/>
    <property type="molecule type" value="Genomic_DNA"/>
</dbReference>
<dbReference type="RefSeq" id="NP_708301.1">
    <property type="nucleotide sequence ID" value="NC_004337.2"/>
</dbReference>
<dbReference type="RefSeq" id="WP_000356956.1">
    <property type="nucleotide sequence ID" value="NZ_WPGW01000011.1"/>
</dbReference>
<dbReference type="SMR" id="P63748"/>
<dbReference type="STRING" id="198214.SF2504"/>
<dbReference type="PaxDb" id="198214-SF2504"/>
<dbReference type="GeneID" id="1025311"/>
<dbReference type="GeneID" id="86860593"/>
<dbReference type="KEGG" id="sfl:SF2504"/>
<dbReference type="KEGG" id="sfx:S2655"/>
<dbReference type="PATRIC" id="fig|198214.7.peg.2994"/>
<dbReference type="HOGENOM" id="CLU_143326_0_0_6"/>
<dbReference type="UniPathway" id="UPA00560"/>
<dbReference type="Proteomes" id="UP000001006">
    <property type="component" value="Chromosome"/>
</dbReference>
<dbReference type="Proteomes" id="UP000002673">
    <property type="component" value="Chromosome"/>
</dbReference>
<dbReference type="GO" id="GO:0031469">
    <property type="term" value="C:bacterial microcompartment"/>
    <property type="evidence" value="ECO:0007669"/>
    <property type="project" value="UniProtKB-SubCell"/>
</dbReference>
<dbReference type="GO" id="GO:0046336">
    <property type="term" value="P:ethanolamine catabolic process"/>
    <property type="evidence" value="ECO:0007669"/>
    <property type="project" value="UniProtKB-UniPathway"/>
</dbReference>
<dbReference type="CDD" id="cd07046">
    <property type="entry name" value="BMC_PduU-EutS"/>
    <property type="match status" value="1"/>
</dbReference>
<dbReference type="FunFam" id="3.30.70.1710:FF:000002">
    <property type="entry name" value="Ethanolamine utilization protein EutS"/>
    <property type="match status" value="1"/>
</dbReference>
<dbReference type="Gene3D" id="3.30.70.1710">
    <property type="match status" value="1"/>
</dbReference>
<dbReference type="InterPro" id="IPR044870">
    <property type="entry name" value="BMC_CP"/>
</dbReference>
<dbReference type="InterPro" id="IPR000249">
    <property type="entry name" value="BMC_dom"/>
</dbReference>
<dbReference type="InterPro" id="IPR037233">
    <property type="entry name" value="CcmK-like_sf"/>
</dbReference>
<dbReference type="InterPro" id="IPR009307">
    <property type="entry name" value="EutS/PduU/CutR"/>
</dbReference>
<dbReference type="NCBIfam" id="NF012012">
    <property type="entry name" value="PRK15468.1"/>
    <property type="match status" value="1"/>
</dbReference>
<dbReference type="PANTHER" id="PTHR40449:SF2">
    <property type="entry name" value="BACTERIAL MICROCOMPARTMENT SHELL PROTEIN EUTS"/>
    <property type="match status" value="1"/>
</dbReference>
<dbReference type="PANTHER" id="PTHR40449">
    <property type="entry name" value="ETHANOLAMINE UTILIZATION PROTEIN EUTS"/>
    <property type="match status" value="1"/>
</dbReference>
<dbReference type="Pfam" id="PF00936">
    <property type="entry name" value="BMC"/>
    <property type="match status" value="1"/>
</dbReference>
<dbReference type="PIRSF" id="PIRSF012296">
    <property type="entry name" value="EutS_PduU"/>
    <property type="match status" value="1"/>
</dbReference>
<dbReference type="SMART" id="SM00877">
    <property type="entry name" value="BMC"/>
    <property type="match status" value="1"/>
</dbReference>
<dbReference type="SUPFAM" id="SSF143414">
    <property type="entry name" value="CcmK-like"/>
    <property type="match status" value="1"/>
</dbReference>
<dbReference type="PROSITE" id="PS51931">
    <property type="entry name" value="BMC_CP"/>
    <property type="match status" value="1"/>
</dbReference>
<keyword id="KW-1283">Bacterial microcompartment</keyword>
<keyword id="KW-1185">Reference proteome</keyword>
<gene>
    <name type="primary">eutS</name>
    <name type="ordered locus">SF2504</name>
    <name type="ordered locus">S2655</name>
</gene>
<protein>
    <recommendedName>
        <fullName>Bacterial microcompartment shell protein EutS</fullName>
    </recommendedName>
    <alternativeName>
        <fullName>Ethanolamine utilization protein EutS</fullName>
    </alternativeName>
</protein>
<organism>
    <name type="scientific">Shigella flexneri</name>
    <dbReference type="NCBI Taxonomy" id="623"/>
    <lineage>
        <taxon>Bacteria</taxon>
        <taxon>Pseudomonadati</taxon>
        <taxon>Pseudomonadota</taxon>
        <taxon>Gammaproteobacteria</taxon>
        <taxon>Enterobacterales</taxon>
        <taxon>Enterobacteriaceae</taxon>
        <taxon>Shigella</taxon>
    </lineage>
</organism>
<evidence type="ECO:0000250" key="1">
    <source>
        <dbReference type="UniProtKB" id="P63746"/>
    </source>
</evidence>
<evidence type="ECO:0000250" key="2">
    <source>
        <dbReference type="UniProtKB" id="Q9ZFV7"/>
    </source>
</evidence>
<evidence type="ECO:0000255" key="3">
    <source>
        <dbReference type="PROSITE-ProRule" id="PRU01279"/>
    </source>
</evidence>
<evidence type="ECO:0000305" key="4"/>
<accession>P63748</accession>
<accession>P76557</accession>
<name>EUTS_SHIFL</name>
<reference key="1">
    <citation type="journal article" date="2002" name="Nucleic Acids Res.">
        <title>Genome sequence of Shigella flexneri 2a: insights into pathogenicity through comparison with genomes of Escherichia coli K12 and O157.</title>
        <authorList>
            <person name="Jin Q."/>
            <person name="Yuan Z."/>
            <person name="Xu J."/>
            <person name="Wang Y."/>
            <person name="Shen Y."/>
            <person name="Lu W."/>
            <person name="Wang J."/>
            <person name="Liu H."/>
            <person name="Yang J."/>
            <person name="Yang F."/>
            <person name="Zhang X."/>
            <person name="Zhang J."/>
            <person name="Yang G."/>
            <person name="Wu H."/>
            <person name="Qu D."/>
            <person name="Dong J."/>
            <person name="Sun L."/>
            <person name="Xue Y."/>
            <person name="Zhao A."/>
            <person name="Gao Y."/>
            <person name="Zhu J."/>
            <person name="Kan B."/>
            <person name="Ding K."/>
            <person name="Chen S."/>
            <person name="Cheng H."/>
            <person name="Yao Z."/>
            <person name="He B."/>
            <person name="Chen R."/>
            <person name="Ma D."/>
            <person name="Qiang B."/>
            <person name="Wen Y."/>
            <person name="Hou Y."/>
            <person name="Yu J."/>
        </authorList>
    </citation>
    <scope>NUCLEOTIDE SEQUENCE [LARGE SCALE GENOMIC DNA]</scope>
    <source>
        <strain>301 / Serotype 2a</strain>
    </source>
</reference>
<reference key="2">
    <citation type="journal article" date="2003" name="Infect. Immun.">
        <title>Complete genome sequence and comparative genomics of Shigella flexneri serotype 2a strain 2457T.</title>
        <authorList>
            <person name="Wei J."/>
            <person name="Goldberg M.B."/>
            <person name="Burland V."/>
            <person name="Venkatesan M.M."/>
            <person name="Deng W."/>
            <person name="Fournier G."/>
            <person name="Mayhew G.F."/>
            <person name="Plunkett G. III"/>
            <person name="Rose D.J."/>
            <person name="Darling A."/>
            <person name="Mau B."/>
            <person name="Perna N.T."/>
            <person name="Payne S.M."/>
            <person name="Runyen-Janecky L.J."/>
            <person name="Zhou S."/>
            <person name="Schwartz D.C."/>
            <person name="Blattner F.R."/>
        </authorList>
    </citation>
    <scope>NUCLEOTIDE SEQUENCE [LARGE SCALE GENOMIC DNA]</scope>
    <source>
        <strain>ATCC 700930 / 2457T / Serotype 2a</strain>
    </source>
</reference>
<feature type="chain" id="PRO_0000201524" description="Bacterial microcompartment shell protein EutS">
    <location>
        <begin position="1"/>
        <end position="111"/>
    </location>
</feature>
<feature type="domain" description="BMC circularly permuted" evidence="3">
    <location>
        <begin position="5"/>
        <end position="103"/>
    </location>
</feature>
<comment type="function">
    <text evidence="1 2 4">A component of the bacterial microcompartment (BMC) shell dedicated to ethanolamine degradation. Its unusual hexameric shape may help form the BMC shell (By similarity). Targets at least 2 proteins (EutC and EutE) to the interior of the BMC (By similarity). Proteins such as EutS containing circularly permuted BMC domains may play a key role in conferring heterogeneity and flexibility in this BMC (Probable).</text>
</comment>
<comment type="pathway">
    <text>Amine and polyamine degradation; ethanolamine degradation.</text>
</comment>
<comment type="subunit">
    <text evidence="1 2">Homohexamer with a central pore; the hexamer is not symmetric, it is bent by about 40 degrees; bending depends on Gly-39 (By similarity). Interacts with the N-terminus of EutC and of EutE, targeting them to the interior of the BMC (By similarity).</text>
</comment>
<comment type="subcellular location">
    <subcellularLocation>
        <location evidence="2">Bacterial microcompartment</location>
    </subcellularLocation>
</comment>
<comment type="domain">
    <text evidence="1">One side of the hexamer is concave and lined by hydrophobic residues, the other side has a slightly protruding, 6-stranded beta-barrel.</text>
</comment>
<comment type="similarity">
    <text evidence="3">Belongs to the EutS/PduU family.</text>
</comment>
<comment type="sequence caution" evidence="4">
    <conflict type="erroneous initiation">
        <sequence resource="EMBL-CDS" id="AAN44008"/>
    </conflict>
    <text>Extended N-terminus.</text>
</comment>
<comment type="sequence caution" evidence="4">
    <conflict type="erroneous initiation">
        <sequence resource="EMBL-CDS" id="AAP17823"/>
    </conflict>
    <text>Extended N-terminus.</text>
</comment>